<sequence>MTRPTHPNALIWLLLSIAIIALDQATKAWVLTSLPEYIPVPVIHGFWNWYRSYNTGAAFSFLSDAGGWQMWLFIALALGISGLLTFWLSRTPRREWRSALPYALIIGGGIGNVIDRFLHGHVVDFIQWYVGSHYWPSFNLADSAIVAGAIGIGLLSLFDSKHSPKTP</sequence>
<feature type="chain" id="PRO_0000178835" description="Lipoprotein signal peptidase">
    <location>
        <begin position="1"/>
        <end position="167"/>
    </location>
</feature>
<feature type="transmembrane region" description="Helical" evidence="1">
    <location>
        <begin position="10"/>
        <end position="30"/>
    </location>
</feature>
<feature type="transmembrane region" description="Helical" evidence="1">
    <location>
        <begin position="68"/>
        <end position="88"/>
    </location>
</feature>
<feature type="transmembrane region" description="Helical" evidence="1">
    <location>
        <begin position="98"/>
        <end position="118"/>
    </location>
</feature>
<feature type="transmembrane region" description="Helical" evidence="1">
    <location>
        <begin position="138"/>
        <end position="158"/>
    </location>
</feature>
<feature type="active site" evidence="1">
    <location>
        <position position="124"/>
    </location>
</feature>
<feature type="active site" evidence="1">
    <location>
        <position position="142"/>
    </location>
</feature>
<protein>
    <recommendedName>
        <fullName evidence="1">Lipoprotein signal peptidase</fullName>
        <ecNumber evidence="1">3.4.23.36</ecNumber>
    </recommendedName>
    <alternativeName>
        <fullName evidence="1">Prolipoprotein signal peptidase</fullName>
    </alternativeName>
    <alternativeName>
        <fullName evidence="1">Signal peptidase II</fullName>
        <shortName evidence="1">SPase II</shortName>
    </alternativeName>
</protein>
<keyword id="KW-0064">Aspartyl protease</keyword>
<keyword id="KW-0997">Cell inner membrane</keyword>
<keyword id="KW-1003">Cell membrane</keyword>
<keyword id="KW-0378">Hydrolase</keyword>
<keyword id="KW-0472">Membrane</keyword>
<keyword id="KW-0645">Protease</keyword>
<keyword id="KW-0812">Transmembrane</keyword>
<keyword id="KW-1133">Transmembrane helix</keyword>
<reference key="1">
    <citation type="journal article" date="2000" name="Nature">
        <title>The genome sequence of the plant pathogen Xylella fastidiosa.</title>
        <authorList>
            <person name="Simpson A.J.G."/>
            <person name="Reinach F.C."/>
            <person name="Arruda P."/>
            <person name="Abreu F.A."/>
            <person name="Acencio M."/>
            <person name="Alvarenga R."/>
            <person name="Alves L.M.C."/>
            <person name="Araya J.E."/>
            <person name="Baia G.S."/>
            <person name="Baptista C.S."/>
            <person name="Barros M.H."/>
            <person name="Bonaccorsi E.D."/>
            <person name="Bordin S."/>
            <person name="Bove J.M."/>
            <person name="Briones M.R.S."/>
            <person name="Bueno M.R.P."/>
            <person name="Camargo A.A."/>
            <person name="Camargo L.E.A."/>
            <person name="Carraro D.M."/>
            <person name="Carrer H."/>
            <person name="Colauto N.B."/>
            <person name="Colombo C."/>
            <person name="Costa F.F."/>
            <person name="Costa M.C.R."/>
            <person name="Costa-Neto C.M."/>
            <person name="Coutinho L.L."/>
            <person name="Cristofani M."/>
            <person name="Dias-Neto E."/>
            <person name="Docena C."/>
            <person name="El-Dorry H."/>
            <person name="Facincani A.P."/>
            <person name="Ferreira A.J.S."/>
            <person name="Ferreira V.C.A."/>
            <person name="Ferro J.A."/>
            <person name="Fraga J.S."/>
            <person name="Franca S.C."/>
            <person name="Franco M.C."/>
            <person name="Frohme M."/>
            <person name="Furlan L.R."/>
            <person name="Garnier M."/>
            <person name="Goldman G.H."/>
            <person name="Goldman M.H.S."/>
            <person name="Gomes S.L."/>
            <person name="Gruber A."/>
            <person name="Ho P.L."/>
            <person name="Hoheisel J.D."/>
            <person name="Junqueira M.L."/>
            <person name="Kemper E.L."/>
            <person name="Kitajima J.P."/>
            <person name="Krieger J.E."/>
            <person name="Kuramae E.E."/>
            <person name="Laigret F."/>
            <person name="Lambais M.R."/>
            <person name="Leite L.C.C."/>
            <person name="Lemos E.G.M."/>
            <person name="Lemos M.V.F."/>
            <person name="Lopes S.A."/>
            <person name="Lopes C.R."/>
            <person name="Machado J.A."/>
            <person name="Machado M.A."/>
            <person name="Madeira A.M.B.N."/>
            <person name="Madeira H.M.F."/>
            <person name="Marino C.L."/>
            <person name="Marques M.V."/>
            <person name="Martins E.A.L."/>
            <person name="Martins E.M.F."/>
            <person name="Matsukuma A.Y."/>
            <person name="Menck C.F.M."/>
            <person name="Miracca E.C."/>
            <person name="Miyaki C.Y."/>
            <person name="Monteiro-Vitorello C.B."/>
            <person name="Moon D.H."/>
            <person name="Nagai M.A."/>
            <person name="Nascimento A.L.T.O."/>
            <person name="Netto L.E.S."/>
            <person name="Nhani A. Jr."/>
            <person name="Nobrega F.G."/>
            <person name="Nunes L.R."/>
            <person name="Oliveira M.A."/>
            <person name="de Oliveira M.C."/>
            <person name="de Oliveira R.C."/>
            <person name="Palmieri D.A."/>
            <person name="Paris A."/>
            <person name="Peixoto B.R."/>
            <person name="Pereira G.A.G."/>
            <person name="Pereira H.A. Jr."/>
            <person name="Pesquero J.B."/>
            <person name="Quaggio R.B."/>
            <person name="Roberto P.G."/>
            <person name="Rodrigues V."/>
            <person name="de Rosa A.J.M."/>
            <person name="de Rosa V.E. Jr."/>
            <person name="de Sa R.G."/>
            <person name="Santelli R.V."/>
            <person name="Sawasaki H.E."/>
            <person name="da Silva A.C.R."/>
            <person name="da Silva A.M."/>
            <person name="da Silva F.R."/>
            <person name="Silva W.A. Jr."/>
            <person name="da Silveira J.F."/>
            <person name="Silvestri M.L.Z."/>
            <person name="Siqueira W.J."/>
            <person name="de Souza A.A."/>
            <person name="de Souza A.P."/>
            <person name="Terenzi M.F."/>
            <person name="Truffi D."/>
            <person name="Tsai S.M."/>
            <person name="Tsuhako M.H."/>
            <person name="Vallada H."/>
            <person name="Van Sluys M.A."/>
            <person name="Verjovski-Almeida S."/>
            <person name="Vettore A.L."/>
            <person name="Zago M.A."/>
            <person name="Zatz M."/>
            <person name="Meidanis J."/>
            <person name="Setubal J.C."/>
        </authorList>
    </citation>
    <scope>NUCLEOTIDE SEQUENCE [LARGE SCALE GENOMIC DNA]</scope>
    <source>
        <strain>9a5c</strain>
    </source>
</reference>
<comment type="function">
    <text evidence="1">This protein specifically catalyzes the removal of signal peptides from prolipoproteins.</text>
</comment>
<comment type="catalytic activity">
    <reaction evidence="1">
        <text>Release of signal peptides from bacterial membrane prolipoproteins. Hydrolyzes -Xaa-Yaa-Zaa-|-(S,diacylglyceryl)Cys-, in which Xaa is hydrophobic (preferably Leu), and Yaa (Ala or Ser) and Zaa (Gly or Ala) have small, neutral side chains.</text>
        <dbReference type="EC" id="3.4.23.36"/>
    </reaction>
</comment>
<comment type="pathway">
    <text evidence="1">Protein modification; lipoprotein biosynthesis (signal peptide cleavage).</text>
</comment>
<comment type="subcellular location">
    <subcellularLocation>
        <location evidence="1">Cell inner membrane</location>
        <topology evidence="1">Multi-pass membrane protein</topology>
    </subcellularLocation>
</comment>
<comment type="similarity">
    <text evidence="1">Belongs to the peptidase A8 family.</text>
</comment>
<evidence type="ECO:0000255" key="1">
    <source>
        <dbReference type="HAMAP-Rule" id="MF_00161"/>
    </source>
</evidence>
<accession>Q9PAS8</accession>
<dbReference type="EC" id="3.4.23.36" evidence="1"/>
<dbReference type="EMBL" id="AE003849">
    <property type="protein sequence ID" value="AAF85216.1"/>
    <property type="molecule type" value="Genomic_DNA"/>
</dbReference>
<dbReference type="PIR" id="D82561">
    <property type="entry name" value="D82561"/>
</dbReference>
<dbReference type="RefSeq" id="WP_010894862.1">
    <property type="nucleotide sequence ID" value="NC_002488.3"/>
</dbReference>
<dbReference type="SMR" id="Q9PAS8"/>
<dbReference type="STRING" id="160492.XF_2417"/>
<dbReference type="KEGG" id="xfa:XF_2417"/>
<dbReference type="eggNOG" id="COG0597">
    <property type="taxonomic scope" value="Bacteria"/>
</dbReference>
<dbReference type="HOGENOM" id="CLU_083252_4_0_6"/>
<dbReference type="UniPathway" id="UPA00665"/>
<dbReference type="Proteomes" id="UP000000812">
    <property type="component" value="Chromosome"/>
</dbReference>
<dbReference type="GO" id="GO:0005886">
    <property type="term" value="C:plasma membrane"/>
    <property type="evidence" value="ECO:0007669"/>
    <property type="project" value="UniProtKB-SubCell"/>
</dbReference>
<dbReference type="GO" id="GO:0004190">
    <property type="term" value="F:aspartic-type endopeptidase activity"/>
    <property type="evidence" value="ECO:0007669"/>
    <property type="project" value="UniProtKB-UniRule"/>
</dbReference>
<dbReference type="GO" id="GO:0006508">
    <property type="term" value="P:proteolysis"/>
    <property type="evidence" value="ECO:0007669"/>
    <property type="project" value="UniProtKB-KW"/>
</dbReference>
<dbReference type="HAMAP" id="MF_00161">
    <property type="entry name" value="LspA"/>
    <property type="match status" value="1"/>
</dbReference>
<dbReference type="InterPro" id="IPR001872">
    <property type="entry name" value="Peptidase_A8"/>
</dbReference>
<dbReference type="NCBIfam" id="TIGR00077">
    <property type="entry name" value="lspA"/>
    <property type="match status" value="1"/>
</dbReference>
<dbReference type="PANTHER" id="PTHR33695">
    <property type="entry name" value="LIPOPROTEIN SIGNAL PEPTIDASE"/>
    <property type="match status" value="1"/>
</dbReference>
<dbReference type="PANTHER" id="PTHR33695:SF1">
    <property type="entry name" value="LIPOPROTEIN SIGNAL PEPTIDASE"/>
    <property type="match status" value="1"/>
</dbReference>
<dbReference type="Pfam" id="PF01252">
    <property type="entry name" value="Peptidase_A8"/>
    <property type="match status" value="1"/>
</dbReference>
<dbReference type="PRINTS" id="PR00781">
    <property type="entry name" value="LIPOSIGPTASE"/>
</dbReference>
<dbReference type="PROSITE" id="PS00855">
    <property type="entry name" value="SPASE_II"/>
    <property type="match status" value="1"/>
</dbReference>
<name>LSPA_XYLFA</name>
<proteinExistence type="inferred from homology"/>
<gene>
    <name evidence="1" type="primary">lspA</name>
    <name type="ordered locus">XF_2417</name>
</gene>
<organism>
    <name type="scientific">Xylella fastidiosa (strain 9a5c)</name>
    <dbReference type="NCBI Taxonomy" id="160492"/>
    <lineage>
        <taxon>Bacteria</taxon>
        <taxon>Pseudomonadati</taxon>
        <taxon>Pseudomonadota</taxon>
        <taxon>Gammaproteobacteria</taxon>
        <taxon>Lysobacterales</taxon>
        <taxon>Lysobacteraceae</taxon>
        <taxon>Xylella</taxon>
    </lineage>
</organism>